<accession>A0T0M8</accession>
<reference key="1">
    <citation type="journal article" date="2007" name="Mol. Genet. Genomics">
        <title>Chloroplast genomes of the diatoms Phaeodactylum tricornutum and Thalassiosira pseudonana: comparison with other plastid genomes of the red lineage.</title>
        <authorList>
            <person name="Oudot-Le Secq M.-P."/>
            <person name="Grimwood J."/>
            <person name="Shapiro H."/>
            <person name="Armbrust E.V."/>
            <person name="Bowler C."/>
            <person name="Green B.R."/>
        </authorList>
    </citation>
    <scope>NUCLEOTIDE SEQUENCE [LARGE SCALE GENOMIC DNA]</scope>
    <source>
        <strain>CCMP1335 / NEPCC58 / CCAP 1085/12</strain>
    </source>
</reference>
<comment type="function">
    <text>PsaA and PsaB bind P700, the primary electron donor of photosystem I (PSI), as well as the electron acceptors A0, A1 and FX. PSI is a plastocyanin/cytochrome c6-ferredoxin oxidoreductase, converting photonic excitation into a charge separation, which transfers an electron from the donor P700 chlorophyll pair to the spectroscopically characterized acceptors A0, A1, FX, FA and FB in turn. Oxidized P700 is reduced on the lumenal side of the thylakoid membrane by plastocyanin or cytochrome c6.</text>
</comment>
<comment type="catalytic activity">
    <reaction evidence="1">
        <text>reduced [plastocyanin] + hnu + oxidized [2Fe-2S]-[ferredoxin] = oxidized [plastocyanin] + reduced [2Fe-2S]-[ferredoxin]</text>
        <dbReference type="Rhea" id="RHEA:30407"/>
        <dbReference type="Rhea" id="RHEA-COMP:10000"/>
        <dbReference type="Rhea" id="RHEA-COMP:10001"/>
        <dbReference type="Rhea" id="RHEA-COMP:10039"/>
        <dbReference type="Rhea" id="RHEA-COMP:10040"/>
        <dbReference type="ChEBI" id="CHEBI:29036"/>
        <dbReference type="ChEBI" id="CHEBI:30212"/>
        <dbReference type="ChEBI" id="CHEBI:33737"/>
        <dbReference type="ChEBI" id="CHEBI:33738"/>
        <dbReference type="ChEBI" id="CHEBI:49552"/>
        <dbReference type="EC" id="1.97.1.12"/>
    </reaction>
</comment>
<comment type="cofactor">
    <text evidence="1">P700 is a chlorophyll a/chlorophyll a' dimer, A0 is one or more chlorophyll a, A1 is one or both phylloquinones and FX is a shared 4Fe-4S iron-sulfur center.</text>
</comment>
<comment type="subunit">
    <text evidence="1">The PsaA/B heterodimer binds the P700 chlorophyll special pair and subsequent electron acceptors. PSI consists of a core antenna complex that captures photons, and an electron transfer chain that converts photonic excitation into a charge separation. The eukaryotic PSI reaction center is composed of at least 11 subunits.</text>
</comment>
<comment type="subcellular location">
    <subcellularLocation>
        <location evidence="1">Plastid</location>
        <location evidence="1">Chloroplast thylakoid membrane</location>
        <topology evidence="1">Multi-pass membrane protein</topology>
    </subcellularLocation>
</comment>
<comment type="similarity">
    <text evidence="1">Belongs to the PsaA/PsaB family.</text>
</comment>
<keyword id="KW-0002">3D-structure</keyword>
<keyword id="KW-0004">4Fe-4S</keyword>
<keyword id="KW-0148">Chlorophyll</keyword>
<keyword id="KW-0150">Chloroplast</keyword>
<keyword id="KW-0157">Chromophore</keyword>
<keyword id="KW-0249">Electron transport</keyword>
<keyword id="KW-0408">Iron</keyword>
<keyword id="KW-0411">Iron-sulfur</keyword>
<keyword id="KW-0460">Magnesium</keyword>
<keyword id="KW-0472">Membrane</keyword>
<keyword id="KW-0479">Metal-binding</keyword>
<keyword id="KW-0560">Oxidoreductase</keyword>
<keyword id="KW-0602">Photosynthesis</keyword>
<keyword id="KW-0603">Photosystem I</keyword>
<keyword id="KW-0934">Plastid</keyword>
<keyword id="KW-0793">Thylakoid</keyword>
<keyword id="KW-0812">Transmembrane</keyword>
<keyword id="KW-1133">Transmembrane helix</keyword>
<keyword id="KW-0813">Transport</keyword>
<feature type="chain" id="PRO_0000275972" description="Photosystem I P700 chlorophyll a apoprotein A1">
    <location>
        <begin position="1"/>
        <end position="752"/>
    </location>
</feature>
<feature type="transmembrane region" description="Helical; Name=I" evidence="1">
    <location>
        <begin position="73"/>
        <end position="96"/>
    </location>
</feature>
<feature type="transmembrane region" description="Helical; Name=II" evidence="1">
    <location>
        <begin position="159"/>
        <end position="182"/>
    </location>
</feature>
<feature type="transmembrane region" description="Helical; Name=III" evidence="1">
    <location>
        <begin position="198"/>
        <end position="222"/>
    </location>
</feature>
<feature type="transmembrane region" description="Helical; Name=IV" evidence="1">
    <location>
        <begin position="294"/>
        <end position="312"/>
    </location>
</feature>
<feature type="transmembrane region" description="Helical; Name=V" evidence="1">
    <location>
        <begin position="349"/>
        <end position="372"/>
    </location>
</feature>
<feature type="transmembrane region" description="Helical; Name=VI" evidence="1">
    <location>
        <begin position="388"/>
        <end position="414"/>
    </location>
</feature>
<feature type="transmembrane region" description="Helical; Name=VII" evidence="1">
    <location>
        <begin position="436"/>
        <end position="458"/>
    </location>
</feature>
<feature type="transmembrane region" description="Helical; Name=VIII" evidence="1">
    <location>
        <begin position="533"/>
        <end position="551"/>
    </location>
</feature>
<feature type="transmembrane region" description="Helical; Name=IX" evidence="1">
    <location>
        <begin position="591"/>
        <end position="612"/>
    </location>
</feature>
<feature type="transmembrane region" description="Helical; Name=X" evidence="1">
    <location>
        <begin position="666"/>
        <end position="688"/>
    </location>
</feature>
<feature type="transmembrane region" description="Helical; Name=XI" evidence="1">
    <location>
        <begin position="726"/>
        <end position="746"/>
    </location>
</feature>
<feature type="binding site" evidence="1">
    <location>
        <position position="575"/>
    </location>
    <ligand>
        <name>[4Fe-4S] cluster</name>
        <dbReference type="ChEBI" id="CHEBI:49883"/>
        <note>ligand shared between dimeric partners</note>
    </ligand>
</feature>
<feature type="binding site" evidence="1">
    <location>
        <position position="584"/>
    </location>
    <ligand>
        <name>[4Fe-4S] cluster</name>
        <dbReference type="ChEBI" id="CHEBI:49883"/>
        <note>ligand shared between dimeric partners</note>
    </ligand>
</feature>
<feature type="binding site" description="axial binding residue" evidence="1">
    <location>
        <position position="677"/>
    </location>
    <ligand>
        <name>chlorophyll a'</name>
        <dbReference type="ChEBI" id="CHEBI:189419"/>
        <label>A1</label>
    </ligand>
    <ligandPart>
        <name>Mg</name>
        <dbReference type="ChEBI" id="CHEBI:25107"/>
    </ligandPart>
</feature>
<feature type="binding site" description="axial binding residue" evidence="1">
    <location>
        <position position="685"/>
    </location>
    <ligand>
        <name>chlorophyll a</name>
        <dbReference type="ChEBI" id="CHEBI:58416"/>
        <label>A3</label>
    </ligand>
    <ligandPart>
        <name>Mg</name>
        <dbReference type="ChEBI" id="CHEBI:25107"/>
    </ligandPart>
</feature>
<feature type="binding site" evidence="1">
    <location>
        <position position="693"/>
    </location>
    <ligand>
        <name>chlorophyll a</name>
        <dbReference type="ChEBI" id="CHEBI:58416"/>
        <label>A3</label>
    </ligand>
</feature>
<feature type="binding site" evidence="1">
    <location>
        <position position="694"/>
    </location>
    <ligand>
        <name>phylloquinone</name>
        <dbReference type="ChEBI" id="CHEBI:18067"/>
        <label>A</label>
    </ligand>
</feature>
<feature type="strand" evidence="2">
    <location>
        <begin position="17"/>
        <end position="20"/>
    </location>
</feature>
<feature type="helix" evidence="2">
    <location>
        <begin position="28"/>
        <end position="30"/>
    </location>
</feature>
<feature type="turn" evidence="2">
    <location>
        <begin position="32"/>
        <end position="35"/>
    </location>
</feature>
<feature type="helix" evidence="2">
    <location>
        <begin position="39"/>
        <end position="41"/>
    </location>
</feature>
<feature type="helix" evidence="2">
    <location>
        <begin position="46"/>
        <end position="54"/>
    </location>
</feature>
<feature type="helix" evidence="2">
    <location>
        <begin position="59"/>
        <end position="62"/>
    </location>
</feature>
<feature type="helix" evidence="2">
    <location>
        <begin position="66"/>
        <end position="97"/>
    </location>
</feature>
<feature type="helix" evidence="2">
    <location>
        <begin position="101"/>
        <end position="106"/>
    </location>
</feature>
<feature type="turn" evidence="2">
    <location>
        <begin position="108"/>
        <end position="110"/>
    </location>
</feature>
<feature type="strand" evidence="2">
    <location>
        <begin position="114"/>
        <end position="116"/>
    </location>
</feature>
<feature type="helix" evidence="2">
    <location>
        <begin position="124"/>
        <end position="127"/>
    </location>
</feature>
<feature type="strand" evidence="2">
    <location>
        <begin position="128"/>
        <end position="130"/>
    </location>
</feature>
<feature type="strand" evidence="2">
    <location>
        <begin position="132"/>
        <end position="134"/>
    </location>
</feature>
<feature type="strand" evidence="2">
    <location>
        <begin position="136"/>
        <end position="139"/>
    </location>
</feature>
<feature type="helix" evidence="2">
    <location>
        <begin position="144"/>
        <end position="151"/>
    </location>
</feature>
<feature type="helix" evidence="2">
    <location>
        <begin position="156"/>
        <end position="182"/>
    </location>
</feature>
<feature type="strand" evidence="2">
    <location>
        <begin position="184"/>
        <end position="186"/>
    </location>
</feature>
<feature type="helix" evidence="2">
    <location>
        <begin position="188"/>
        <end position="191"/>
    </location>
</feature>
<feature type="helix" evidence="2">
    <location>
        <begin position="194"/>
        <end position="203"/>
    </location>
</feature>
<feature type="helix" evidence="2">
    <location>
        <begin position="205"/>
        <end position="219"/>
    </location>
</feature>
<feature type="helix" evidence="2">
    <location>
        <begin position="221"/>
        <end position="229"/>
    </location>
</feature>
<feature type="turn" evidence="2">
    <location>
        <begin position="234"/>
        <end position="236"/>
    </location>
</feature>
<feature type="helix" evidence="2">
    <location>
        <begin position="240"/>
        <end position="245"/>
    </location>
</feature>
<feature type="helix" evidence="2">
    <location>
        <begin position="247"/>
        <end position="253"/>
    </location>
</feature>
<feature type="helix" evidence="2">
    <location>
        <begin position="255"/>
        <end position="258"/>
    </location>
</feature>
<feature type="turn" evidence="2">
    <location>
        <begin position="259"/>
        <end position="261"/>
    </location>
</feature>
<feature type="helix" evidence="2">
    <location>
        <begin position="262"/>
        <end position="266"/>
    </location>
</feature>
<feature type="helix" evidence="2">
    <location>
        <begin position="269"/>
        <end position="274"/>
    </location>
</feature>
<feature type="turn" evidence="2">
    <location>
        <begin position="284"/>
        <end position="286"/>
    </location>
</feature>
<feature type="helix" evidence="2">
    <location>
        <begin position="291"/>
        <end position="308"/>
    </location>
</feature>
<feature type="strand" evidence="2">
    <location>
        <begin position="314"/>
        <end position="317"/>
    </location>
</feature>
<feature type="helix" evidence="2">
    <location>
        <begin position="322"/>
        <end position="328"/>
    </location>
</feature>
<feature type="turn" evidence="2">
    <location>
        <begin position="335"/>
        <end position="340"/>
    </location>
</feature>
<feature type="helix" evidence="2">
    <location>
        <begin position="341"/>
        <end position="347"/>
    </location>
</feature>
<feature type="helix" evidence="2">
    <location>
        <begin position="349"/>
        <end position="373"/>
    </location>
</feature>
<feature type="helix" evidence="2">
    <location>
        <begin position="384"/>
        <end position="415"/>
    </location>
</feature>
<feature type="strand" evidence="2">
    <location>
        <begin position="423"/>
        <end position="425"/>
    </location>
</feature>
<feature type="helix" evidence="2">
    <location>
        <begin position="426"/>
        <end position="432"/>
    </location>
</feature>
<feature type="helix" evidence="2">
    <location>
        <begin position="434"/>
        <end position="464"/>
    </location>
</feature>
<feature type="helix" evidence="2">
    <location>
        <begin position="468"/>
        <end position="470"/>
    </location>
</feature>
<feature type="strand" evidence="2">
    <location>
        <begin position="471"/>
        <end position="473"/>
    </location>
</feature>
<feature type="helix" evidence="2">
    <location>
        <begin position="482"/>
        <end position="493"/>
    </location>
</feature>
<feature type="helix" evidence="2">
    <location>
        <begin position="494"/>
        <end position="496"/>
    </location>
</feature>
<feature type="helix" evidence="2">
    <location>
        <begin position="508"/>
        <end position="510"/>
    </location>
</feature>
<feature type="strand" evidence="2">
    <location>
        <begin position="515"/>
        <end position="517"/>
    </location>
</feature>
<feature type="strand" evidence="2">
    <location>
        <begin position="520"/>
        <end position="523"/>
    </location>
</feature>
<feature type="helix" evidence="2">
    <location>
        <begin position="530"/>
        <end position="555"/>
    </location>
</feature>
<feature type="helix" evidence="2">
    <location>
        <begin position="566"/>
        <end position="569"/>
    </location>
</feature>
<feature type="helix" evidence="2">
    <location>
        <begin position="588"/>
        <end position="617"/>
    </location>
</feature>
<feature type="strand" evidence="2">
    <location>
        <begin position="620"/>
        <end position="622"/>
    </location>
</feature>
<feature type="strand" evidence="2">
    <location>
        <begin position="628"/>
        <end position="630"/>
    </location>
</feature>
<feature type="turn" evidence="2">
    <location>
        <begin position="631"/>
        <end position="634"/>
    </location>
</feature>
<feature type="helix" evidence="2">
    <location>
        <begin position="636"/>
        <end position="639"/>
    </location>
</feature>
<feature type="helix" evidence="2">
    <location>
        <begin position="643"/>
        <end position="649"/>
    </location>
</feature>
<feature type="helix" evidence="2">
    <location>
        <begin position="651"/>
        <end position="654"/>
    </location>
</feature>
<feature type="helix" evidence="2">
    <location>
        <begin position="656"/>
        <end position="659"/>
    </location>
</feature>
<feature type="helix" evidence="2">
    <location>
        <begin position="667"/>
        <end position="688"/>
    </location>
</feature>
<feature type="helix" evidence="2">
    <location>
        <begin position="691"/>
        <end position="707"/>
    </location>
</feature>
<feature type="strand" evidence="2">
    <location>
        <begin position="713"/>
        <end position="715"/>
    </location>
</feature>
<feature type="helix" evidence="2">
    <location>
        <begin position="721"/>
        <end position="751"/>
    </location>
</feature>
<organism>
    <name type="scientific">Thalassiosira pseudonana</name>
    <name type="common">Marine diatom</name>
    <name type="synonym">Cyclotella nana</name>
    <dbReference type="NCBI Taxonomy" id="35128"/>
    <lineage>
        <taxon>Eukaryota</taxon>
        <taxon>Sar</taxon>
        <taxon>Stramenopiles</taxon>
        <taxon>Ochrophyta</taxon>
        <taxon>Bacillariophyta</taxon>
        <taxon>Coscinodiscophyceae</taxon>
        <taxon>Thalassiosirophycidae</taxon>
        <taxon>Thalassiosirales</taxon>
        <taxon>Thalassiosiraceae</taxon>
        <taxon>Thalassiosira</taxon>
    </lineage>
</organism>
<gene>
    <name evidence="1" type="primary">psaA</name>
</gene>
<protein>
    <recommendedName>
        <fullName evidence="1">Photosystem I P700 chlorophyll a apoprotein A1</fullName>
        <ecNumber evidence="1">1.97.1.12</ecNumber>
    </recommendedName>
    <alternativeName>
        <fullName evidence="1">PSI-A</fullName>
    </alternativeName>
    <alternativeName>
        <fullName evidence="1">PsaA</fullName>
    </alternativeName>
</protein>
<proteinExistence type="evidence at protein level"/>
<dbReference type="EC" id="1.97.1.12" evidence="1"/>
<dbReference type="EMBL" id="EF067921">
    <property type="protein sequence ID" value="ABK20713.1"/>
    <property type="molecule type" value="Genomic_DNA"/>
</dbReference>
<dbReference type="RefSeq" id="YP_874490.1">
    <property type="nucleotide sequence ID" value="NC_008589.1"/>
</dbReference>
<dbReference type="PDB" id="8XLS">
    <property type="method" value="EM"/>
    <property type="resolution" value="2.30 A"/>
    <property type="chains" value="A=1-752"/>
</dbReference>
<dbReference type="PDB" id="8ZEH">
    <property type="method" value="EM"/>
    <property type="resolution" value="2.78 A"/>
    <property type="chains" value="a=10-752"/>
</dbReference>
<dbReference type="PDB" id="8ZET">
    <property type="method" value="EM"/>
    <property type="resolution" value="3.20 A"/>
    <property type="chains" value="a=10-752"/>
</dbReference>
<dbReference type="PDBsum" id="8XLS"/>
<dbReference type="PDBsum" id="8ZEH"/>
<dbReference type="PDBsum" id="8ZET"/>
<dbReference type="EMDB" id="EMD-38457"/>
<dbReference type="EMDB" id="EMD-60032"/>
<dbReference type="EMDB" id="EMD-60044"/>
<dbReference type="SMR" id="A0T0M8"/>
<dbReference type="STRING" id="35128.A0T0M8"/>
<dbReference type="GeneID" id="4524813"/>
<dbReference type="InParanoid" id="A0T0M8"/>
<dbReference type="GO" id="GO:0009535">
    <property type="term" value="C:chloroplast thylakoid membrane"/>
    <property type="evidence" value="ECO:0007669"/>
    <property type="project" value="UniProtKB-SubCell"/>
</dbReference>
<dbReference type="GO" id="GO:0009522">
    <property type="term" value="C:photosystem I"/>
    <property type="evidence" value="ECO:0007669"/>
    <property type="project" value="UniProtKB-KW"/>
</dbReference>
<dbReference type="GO" id="GO:0051539">
    <property type="term" value="F:4 iron, 4 sulfur cluster binding"/>
    <property type="evidence" value="ECO:0007669"/>
    <property type="project" value="UniProtKB-KW"/>
</dbReference>
<dbReference type="GO" id="GO:0016168">
    <property type="term" value="F:chlorophyll binding"/>
    <property type="evidence" value="ECO:0007669"/>
    <property type="project" value="UniProtKB-KW"/>
</dbReference>
<dbReference type="GO" id="GO:0009055">
    <property type="term" value="F:electron transfer activity"/>
    <property type="evidence" value="ECO:0007669"/>
    <property type="project" value="UniProtKB-UniRule"/>
</dbReference>
<dbReference type="GO" id="GO:0000287">
    <property type="term" value="F:magnesium ion binding"/>
    <property type="evidence" value="ECO:0007669"/>
    <property type="project" value="UniProtKB-UniRule"/>
</dbReference>
<dbReference type="GO" id="GO:0016491">
    <property type="term" value="F:oxidoreductase activity"/>
    <property type="evidence" value="ECO:0007669"/>
    <property type="project" value="UniProtKB-KW"/>
</dbReference>
<dbReference type="GO" id="GO:0015979">
    <property type="term" value="P:photosynthesis"/>
    <property type="evidence" value="ECO:0007669"/>
    <property type="project" value="UniProtKB-UniRule"/>
</dbReference>
<dbReference type="Gene3D" id="1.20.1130.10">
    <property type="entry name" value="Photosystem I PsaA/PsaB"/>
    <property type="match status" value="1"/>
</dbReference>
<dbReference type="HAMAP" id="MF_00458">
    <property type="entry name" value="PSI_PsaA"/>
    <property type="match status" value="1"/>
</dbReference>
<dbReference type="InterPro" id="IPR006243">
    <property type="entry name" value="PSI_PsaA"/>
</dbReference>
<dbReference type="InterPro" id="IPR001280">
    <property type="entry name" value="PSI_PsaA/B"/>
</dbReference>
<dbReference type="InterPro" id="IPR020586">
    <property type="entry name" value="PSI_PsaA/B_CS"/>
</dbReference>
<dbReference type="InterPro" id="IPR036408">
    <property type="entry name" value="PSI_PsaA/B_sf"/>
</dbReference>
<dbReference type="NCBIfam" id="TIGR01335">
    <property type="entry name" value="psaA"/>
    <property type="match status" value="1"/>
</dbReference>
<dbReference type="PANTHER" id="PTHR30128">
    <property type="entry name" value="OUTER MEMBRANE PROTEIN, OMPA-RELATED"/>
    <property type="match status" value="1"/>
</dbReference>
<dbReference type="PANTHER" id="PTHR30128:SF19">
    <property type="entry name" value="PHOTOSYSTEM I P700 CHLOROPHYLL A APOPROTEIN A1-RELATED"/>
    <property type="match status" value="1"/>
</dbReference>
<dbReference type="Pfam" id="PF00223">
    <property type="entry name" value="PsaA_PsaB"/>
    <property type="match status" value="1"/>
</dbReference>
<dbReference type="PIRSF" id="PIRSF002905">
    <property type="entry name" value="PSI_A"/>
    <property type="match status" value="1"/>
</dbReference>
<dbReference type="PRINTS" id="PR00257">
    <property type="entry name" value="PHOTSYSPSAAB"/>
</dbReference>
<dbReference type="SUPFAM" id="SSF81558">
    <property type="entry name" value="Photosystem I subunits PsaA/PsaB"/>
    <property type="match status" value="1"/>
</dbReference>
<dbReference type="PROSITE" id="PS00419">
    <property type="entry name" value="PHOTOSYSTEM_I_PSAAB"/>
    <property type="match status" value="1"/>
</dbReference>
<name>PSAA_THAPS</name>
<geneLocation type="chloroplast"/>
<evidence type="ECO:0000255" key="1">
    <source>
        <dbReference type="HAMAP-Rule" id="MF_00458"/>
    </source>
</evidence>
<evidence type="ECO:0007829" key="2">
    <source>
        <dbReference type="PDB" id="8XLS"/>
    </source>
</evidence>
<sequence>MAISSTERRSKNVQVFVEKDAVETSFAKWAQPGHFSRTLAKGPKTTTWIWNLHADAHDFDSQTSSLEEVSRKIFSAHFGQLAIIFLWISGMHFHGAYFSNYSAWLTDPISIKQSSQVVWPIVGQEILNADVGGNFQGIQTTSGWFQMWRAEGITSEVELYWTAIGGLAMSAIMLFAGWFHYHKAAPKLEWFQNAESMMNHHLAGLLGLGCLSWSGHQIHIALPINKLLDAGVSPQEIPLPHEFLINRDLMAQLYPSFSKGLAPFFGGNWGEYSDFLTFKGGLNPVTGGLWLSDIAHHHLALSVLFIIAGHMYRTNWGIGHNMKEILEAHKGPFTGEGHKGLYEILTTSWHAQLAINLAMMGSLSIIVAHHMYAMPPYPYLATDYATQLSLFTHHMWIGGFCVVGGAAHGAIFMVRDYTPANNYNNLLDRVLRHRDAIISHLNWVCIFLGCHAFGFYIHNDTMRALGRPQDMFSDKAIQLQPIFAQWIQNIHLLAPGTTAPNALATTSYAFGGDVIEVGGKIAMMPIKLGTADFMVHHIHAFTIHVTVLILLKGVLYARSSKLIPDKANLGFRFPCDGPGRGGTCQSSSWDHVFLGLFWMYNSISVVIFHFSWKMQSDVWGTITPDGAISHITGGNFAQSSITINGWLRDFLWSQASQVIQSYGSASSAYGLIFLGAHFIWAFSLMFLFSGRGYWQELIESIVWAHNKLNFAPTIQPRALSITQGRAVGLAHYLLGGIGTTWAFFLARAISIT</sequence>